<dbReference type="EC" id="3.5.4.30" evidence="1"/>
<dbReference type="EMBL" id="CP001080">
    <property type="protein sequence ID" value="ACD66460.1"/>
    <property type="molecule type" value="Genomic_DNA"/>
</dbReference>
<dbReference type="RefSeq" id="WP_007547003.1">
    <property type="nucleotide sequence ID" value="NC_010730.1"/>
</dbReference>
<dbReference type="SMR" id="B2V937"/>
<dbReference type="STRING" id="436114.SYO3AOP1_0827"/>
<dbReference type="KEGG" id="sul:SYO3AOP1_0827"/>
<dbReference type="eggNOG" id="COG0717">
    <property type="taxonomic scope" value="Bacteria"/>
</dbReference>
<dbReference type="HOGENOM" id="CLU_087476_2_1_0"/>
<dbReference type="UniPathway" id="UPA00610">
    <property type="reaction ID" value="UER00667"/>
</dbReference>
<dbReference type="GO" id="GO:0033973">
    <property type="term" value="F:dCTP deaminase (dUMP-forming) activity"/>
    <property type="evidence" value="ECO:0007669"/>
    <property type="project" value="UniProtKB-UniRule"/>
</dbReference>
<dbReference type="GO" id="GO:0008829">
    <property type="term" value="F:dCTP deaminase activity"/>
    <property type="evidence" value="ECO:0007669"/>
    <property type="project" value="InterPro"/>
</dbReference>
<dbReference type="GO" id="GO:0000166">
    <property type="term" value="F:nucleotide binding"/>
    <property type="evidence" value="ECO:0007669"/>
    <property type="project" value="UniProtKB-KW"/>
</dbReference>
<dbReference type="GO" id="GO:0006226">
    <property type="term" value="P:dUMP biosynthetic process"/>
    <property type="evidence" value="ECO:0007669"/>
    <property type="project" value="UniProtKB-UniRule"/>
</dbReference>
<dbReference type="GO" id="GO:0006229">
    <property type="term" value="P:dUTP biosynthetic process"/>
    <property type="evidence" value="ECO:0007669"/>
    <property type="project" value="InterPro"/>
</dbReference>
<dbReference type="GO" id="GO:0015949">
    <property type="term" value="P:nucleobase-containing small molecule interconversion"/>
    <property type="evidence" value="ECO:0007669"/>
    <property type="project" value="TreeGrafter"/>
</dbReference>
<dbReference type="CDD" id="cd07557">
    <property type="entry name" value="trimeric_dUTPase"/>
    <property type="match status" value="1"/>
</dbReference>
<dbReference type="Gene3D" id="2.70.40.10">
    <property type="match status" value="1"/>
</dbReference>
<dbReference type="HAMAP" id="MF_00146">
    <property type="entry name" value="dCTP_deaminase"/>
    <property type="match status" value="1"/>
</dbReference>
<dbReference type="InterPro" id="IPR011962">
    <property type="entry name" value="dCTP_deaminase"/>
</dbReference>
<dbReference type="InterPro" id="IPR036157">
    <property type="entry name" value="dUTPase-like_sf"/>
</dbReference>
<dbReference type="InterPro" id="IPR033704">
    <property type="entry name" value="dUTPase_trimeric"/>
</dbReference>
<dbReference type="NCBIfam" id="TIGR02274">
    <property type="entry name" value="dCTP_deam"/>
    <property type="match status" value="1"/>
</dbReference>
<dbReference type="PANTHER" id="PTHR42680">
    <property type="entry name" value="DCTP DEAMINASE"/>
    <property type="match status" value="1"/>
</dbReference>
<dbReference type="PANTHER" id="PTHR42680:SF3">
    <property type="entry name" value="DCTP DEAMINASE"/>
    <property type="match status" value="1"/>
</dbReference>
<dbReference type="Pfam" id="PF22769">
    <property type="entry name" value="DCD"/>
    <property type="match status" value="1"/>
</dbReference>
<dbReference type="SUPFAM" id="SSF51283">
    <property type="entry name" value="dUTPase-like"/>
    <property type="match status" value="1"/>
</dbReference>
<feature type="chain" id="PRO_1000096458" description="dCTP deaminase, dUMP-forming">
    <location>
        <begin position="1"/>
        <end position="180"/>
    </location>
</feature>
<feature type="active site" description="Proton donor/acceptor" evidence="1">
    <location>
        <position position="127"/>
    </location>
</feature>
<feature type="binding site" evidence="1">
    <location>
        <begin position="100"/>
        <end position="105"/>
    </location>
    <ligand>
        <name>dCTP</name>
        <dbReference type="ChEBI" id="CHEBI:61481"/>
    </ligand>
</feature>
<feature type="binding site" evidence="1">
    <location>
        <position position="117"/>
    </location>
    <ligand>
        <name>dCTP</name>
        <dbReference type="ChEBI" id="CHEBI:61481"/>
    </ligand>
</feature>
<feature type="binding site" evidence="1">
    <location>
        <begin position="125"/>
        <end position="127"/>
    </location>
    <ligand>
        <name>dCTP</name>
        <dbReference type="ChEBI" id="CHEBI:61481"/>
    </ligand>
</feature>
<feature type="binding site" evidence="1">
    <location>
        <position position="146"/>
    </location>
    <ligand>
        <name>dCTP</name>
        <dbReference type="ChEBI" id="CHEBI:61481"/>
    </ligand>
</feature>
<feature type="binding site" evidence="1">
    <location>
        <position position="160"/>
    </location>
    <ligand>
        <name>dCTP</name>
        <dbReference type="ChEBI" id="CHEBI:61481"/>
    </ligand>
</feature>
<feature type="binding site" evidence="1">
    <location>
        <position position="167"/>
    </location>
    <ligand>
        <name>dCTP</name>
        <dbReference type="ChEBI" id="CHEBI:61481"/>
    </ligand>
</feature>
<feature type="site" description="Important for bifunctional activity" evidence="1">
    <location>
        <begin position="114"/>
        <end position="115"/>
    </location>
</feature>
<proteinExistence type="inferred from homology"/>
<evidence type="ECO:0000255" key="1">
    <source>
        <dbReference type="HAMAP-Rule" id="MF_00146"/>
    </source>
</evidence>
<accession>B2V937</accession>
<reference key="1">
    <citation type="journal article" date="2009" name="J. Bacteriol.">
        <title>Complete and draft genome sequences of six members of the Aquificales.</title>
        <authorList>
            <person name="Reysenbach A.-L."/>
            <person name="Hamamura N."/>
            <person name="Podar M."/>
            <person name="Griffiths E."/>
            <person name="Ferreira S."/>
            <person name="Hochstein R."/>
            <person name="Heidelberg J."/>
            <person name="Johnson J."/>
            <person name="Mead D."/>
            <person name="Pohorille A."/>
            <person name="Sarmiento M."/>
            <person name="Schweighofer K."/>
            <person name="Seshadri R."/>
            <person name="Voytek M.A."/>
        </authorList>
    </citation>
    <scope>NUCLEOTIDE SEQUENCE [LARGE SCALE GENOMIC DNA]</scope>
    <source>
        <strain>YO3AOP1</strain>
    </source>
</reference>
<sequence length="180" mass="20679">MILNDKTIRKYISEGLLEINPLDDIQIQPSSVDLRLGNEFLIYPEDIEIIDVRDPYFSNRLIKEIATEEGFIIKPKQFVLATTIEYIKLPDFLTAFVEGRSSLGRLGLFIENAGWVDAGFEGNITLEFYNANSIPIKIYPGMRICQLVFAKMEDRSEKPYRGKYQGQRGTTASRIFLDRD</sequence>
<protein>
    <recommendedName>
        <fullName evidence="1">dCTP deaminase, dUMP-forming</fullName>
        <ecNumber evidence="1">3.5.4.30</ecNumber>
    </recommendedName>
    <alternativeName>
        <fullName evidence="1">Bifunctional dCTP deaminase:dUTPase</fullName>
    </alternativeName>
    <alternativeName>
        <fullName evidence="1">DCD-DUT</fullName>
    </alternativeName>
</protein>
<keyword id="KW-0378">Hydrolase</keyword>
<keyword id="KW-0546">Nucleotide metabolism</keyword>
<keyword id="KW-0547">Nucleotide-binding</keyword>
<comment type="function">
    <text evidence="1">Bifunctional enzyme that catalyzes both the deamination of dCTP to dUTP and the hydrolysis of dUTP to dUMP without releasing the toxic dUTP intermediate.</text>
</comment>
<comment type="catalytic activity">
    <reaction evidence="1">
        <text>dCTP + 2 H2O = dUMP + NH4(+) + diphosphate</text>
        <dbReference type="Rhea" id="RHEA:19205"/>
        <dbReference type="ChEBI" id="CHEBI:15377"/>
        <dbReference type="ChEBI" id="CHEBI:28938"/>
        <dbReference type="ChEBI" id="CHEBI:33019"/>
        <dbReference type="ChEBI" id="CHEBI:61481"/>
        <dbReference type="ChEBI" id="CHEBI:246422"/>
        <dbReference type="EC" id="3.5.4.30"/>
    </reaction>
</comment>
<comment type="pathway">
    <text evidence="1">Pyrimidine metabolism; dUMP biosynthesis; dUMP from dCTP: step 1/1.</text>
</comment>
<comment type="subunit">
    <text evidence="1">Homotrimer.</text>
</comment>
<comment type="similarity">
    <text evidence="1">Belongs to the dCTP deaminase family.</text>
</comment>
<name>DCDB_SULSY</name>
<organism>
    <name type="scientific">Sulfurihydrogenibium sp. (strain YO3AOP1)</name>
    <dbReference type="NCBI Taxonomy" id="436114"/>
    <lineage>
        <taxon>Bacteria</taxon>
        <taxon>Pseudomonadati</taxon>
        <taxon>Aquificota</taxon>
        <taxon>Aquificia</taxon>
        <taxon>Aquificales</taxon>
        <taxon>Hydrogenothermaceae</taxon>
        <taxon>Sulfurihydrogenibium</taxon>
    </lineage>
</organism>
<gene>
    <name evidence="1" type="primary">dcd</name>
    <name type="ordered locus">SYO3AOP1_0827</name>
</gene>